<feature type="chain" id="PRO_0000067543" description="Urease subunit alpha">
    <location>
        <begin position="1"/>
        <end position="567"/>
    </location>
</feature>
<feature type="domain" description="Urease" evidence="1">
    <location>
        <begin position="129"/>
        <end position="567"/>
    </location>
</feature>
<feature type="active site" description="Proton donor">
    <location>
        <position position="320"/>
    </location>
</feature>
<feature type="binding site">
    <location>
        <position position="134"/>
    </location>
    <ligand>
        <name>Ni(2+)</name>
        <dbReference type="ChEBI" id="CHEBI:49786"/>
        <label>1</label>
    </ligand>
</feature>
<feature type="binding site">
    <location>
        <position position="136"/>
    </location>
    <ligand>
        <name>Ni(2+)</name>
        <dbReference type="ChEBI" id="CHEBI:49786"/>
        <label>1</label>
    </ligand>
</feature>
<feature type="binding site" description="via carbamate group">
    <location>
        <position position="217"/>
    </location>
    <ligand>
        <name>Ni(2+)</name>
        <dbReference type="ChEBI" id="CHEBI:49786"/>
        <label>1</label>
    </ligand>
</feature>
<feature type="binding site" description="via carbamate group">
    <location>
        <position position="217"/>
    </location>
    <ligand>
        <name>Ni(2+)</name>
        <dbReference type="ChEBI" id="CHEBI:49786"/>
        <label>2</label>
    </ligand>
</feature>
<feature type="binding site">
    <location>
        <position position="219"/>
    </location>
    <ligand>
        <name>substrate</name>
    </ligand>
</feature>
<feature type="binding site">
    <location>
        <position position="246"/>
    </location>
    <ligand>
        <name>Ni(2+)</name>
        <dbReference type="ChEBI" id="CHEBI:49786"/>
        <label>2</label>
    </ligand>
</feature>
<feature type="binding site">
    <location>
        <position position="272"/>
    </location>
    <ligand>
        <name>Ni(2+)</name>
        <dbReference type="ChEBI" id="CHEBI:49786"/>
        <label>2</label>
    </ligand>
</feature>
<feature type="binding site">
    <location>
        <position position="360"/>
    </location>
    <ligand>
        <name>Ni(2+)</name>
        <dbReference type="ChEBI" id="CHEBI:49786"/>
        <label>1</label>
    </ligand>
</feature>
<feature type="modified residue" description="N6-carboxylysine" evidence="1 4 12 16 17">
    <location>
        <position position="217"/>
    </location>
</feature>
<feature type="mutagenesis site" description="Abrogates activity and reduces binding to nickel ions." evidence="15">
    <original>H</original>
    <variation>A</variation>
    <location>
        <position position="134"/>
    </location>
</feature>
<feature type="mutagenesis site" description="Abrogates activity and reduces binding to nickel ions." evidence="15">
    <original>H</original>
    <variation>A</variation>
    <location>
        <position position="136"/>
    </location>
</feature>
<feature type="mutagenesis site" description="Reduces activity 8000-fold and abrogates binding to nickel ions." evidence="20">
    <original>K</original>
    <variation>A</variation>
    <variation>C</variation>
    <variation>E</variation>
    <location>
        <position position="217"/>
    </location>
</feature>
<feature type="mutagenesis site" description="Reduces activity 500-fold and increases KM 1000-fold. Resistant to inactivation by diethylpyrocarbonate and iodoacetamide." evidence="4 15">
    <original>H</original>
    <variation>A</variation>
    <location>
        <position position="219"/>
    </location>
</feature>
<feature type="mutagenesis site" description="Increases KM 100-fold; optimum pH is 6." evidence="4 15">
    <original>H</original>
    <variation>N</variation>
    <variation>Q</variation>
    <location>
        <position position="219"/>
    </location>
</feature>
<feature type="mutagenesis site" description="Reduces activity 1000-fold and increases KM 10-fold." evidence="4">
    <original>D</original>
    <variation>A</variation>
    <location>
        <position position="221"/>
    </location>
</feature>
<feature type="mutagenesis site" description="Reduces activity 50-fold." evidence="4">
    <original>D</original>
    <variation>N</variation>
    <location>
        <position position="221"/>
    </location>
</feature>
<feature type="mutagenesis site" description="Abrogates activity and reduces binding to nickel ions." evidence="15">
    <original>H</original>
    <variation>A</variation>
    <location>
        <position position="246"/>
    </location>
</feature>
<feature type="mutagenesis site" description="Enhances thermal stability above 50 degrees Celsius.">
    <original>H</original>
    <variation>A</variation>
    <location>
        <position position="312"/>
    </location>
</feature>
<feature type="mutagenesis site" description="Reduces activity 2-fold, but increases KM only 1.7-fold; optimum pH is 6.7. Reduces binding of nickel ions. Resistant to inactivation by iodoacetamide." evidence="3 7">
    <original>C</original>
    <variation>A</variation>
    <location>
        <position position="319"/>
    </location>
</feature>
<feature type="mutagenesis site" description="Reduces activity 20-fold, but increases KM only 1.9-fold; optimum pH is 5.2. Reduces binding of nickel ions. Resistant to inactivation by iodoacetamide." evidence="3 7">
    <original>C</original>
    <variation>D</variation>
    <location>
        <position position="319"/>
    </location>
</feature>
<feature type="mutagenesis site" description="Reduces activity 3000-fold, but increases KM only 3.9-fold; optimum pH is 5.2. Reduces binding of nickel ions. Resistant to inactivation by iodoacetamide." evidence="3 7">
    <original>C</original>
    <variation>S</variation>
    <location>
        <position position="319"/>
    </location>
</feature>
<feature type="mutagenesis site" description="Abrogates activity." evidence="3 7">
    <original>C</original>
    <variation>Y</variation>
    <location>
        <position position="319"/>
    </location>
</feature>
<feature type="mutagenesis site" description="Reduces activity 100000-fold, but increases KM only 3-fold; optimum pH is 6.75. Resistant to inactivation by diethylpyrocarbonate and iodoacetamide." evidence="4 15">
    <original>H</original>
    <variation>A</variation>
    <location>
        <position position="320"/>
    </location>
</feature>
<feature type="mutagenesis site" description="Reduces activity 100000-fold, but increases KM only 3-fold." evidence="4 15">
    <original>H</original>
    <variation>N</variation>
    <variation>Q</variation>
    <location>
        <position position="320"/>
    </location>
</feature>
<feature type="mutagenesis site" description="Reduces activity 10000-fold, but has no effect on KM." evidence="4">
    <original>R</original>
    <variation>Q</variation>
    <location>
        <position position="336"/>
    </location>
</feature>
<feature type="strand" evidence="25">
    <location>
        <begin position="3"/>
        <end position="5"/>
    </location>
</feature>
<feature type="helix" evidence="25">
    <location>
        <begin position="6"/>
        <end position="13"/>
    </location>
</feature>
<feature type="strand" evidence="25">
    <location>
        <begin position="20"/>
        <end position="22"/>
    </location>
</feature>
<feature type="strand" evidence="25">
    <location>
        <begin position="29"/>
        <end position="31"/>
    </location>
</feature>
<feature type="strand" evidence="25">
    <location>
        <begin position="50"/>
        <end position="53"/>
    </location>
</feature>
<feature type="turn" evidence="25">
    <location>
        <begin position="54"/>
        <end position="56"/>
    </location>
</feature>
<feature type="helix" evidence="25">
    <location>
        <begin position="62"/>
        <end position="64"/>
    </location>
</feature>
<feature type="strand" evidence="25">
    <location>
        <begin position="67"/>
        <end position="77"/>
    </location>
</feature>
<feature type="strand" evidence="25">
    <location>
        <begin position="80"/>
        <end position="89"/>
    </location>
</feature>
<feature type="strand" evidence="25">
    <location>
        <begin position="92"/>
        <end position="97"/>
    </location>
</feature>
<feature type="turn" evidence="25">
    <location>
        <begin position="102"/>
        <end position="104"/>
    </location>
</feature>
<feature type="strand" evidence="27">
    <location>
        <begin position="105"/>
        <end position="107"/>
    </location>
</feature>
<feature type="strand" evidence="26">
    <location>
        <begin position="109"/>
        <end position="111"/>
    </location>
</feature>
<feature type="strand" evidence="25">
    <location>
        <begin position="117"/>
        <end position="120"/>
    </location>
</feature>
<feature type="strand" evidence="25">
    <location>
        <begin position="125"/>
        <end position="128"/>
    </location>
</feature>
<feature type="strand" evidence="25">
    <location>
        <begin position="130"/>
        <end position="136"/>
    </location>
</feature>
<feature type="helix" evidence="25">
    <location>
        <begin position="142"/>
        <end position="149"/>
    </location>
</feature>
<feature type="strand" evidence="25">
    <location>
        <begin position="151"/>
        <end position="157"/>
    </location>
</feature>
<feature type="strand" evidence="25">
    <location>
        <begin position="159"/>
        <end position="162"/>
    </location>
</feature>
<feature type="helix" evidence="25">
    <location>
        <begin position="163"/>
        <end position="167"/>
    </location>
</feature>
<feature type="helix" evidence="25">
    <location>
        <begin position="173"/>
        <end position="184"/>
    </location>
</feature>
<feature type="strand" evidence="25">
    <location>
        <begin position="187"/>
        <end position="196"/>
    </location>
</feature>
<feature type="helix" evidence="25">
    <location>
        <begin position="202"/>
        <end position="211"/>
    </location>
</feature>
<feature type="strand" evidence="25">
    <location>
        <begin position="214"/>
        <end position="219"/>
    </location>
</feature>
<feature type="helix" evidence="25">
    <location>
        <begin position="220"/>
        <end position="222"/>
    </location>
</feature>
<feature type="helix" evidence="25">
    <location>
        <begin position="226"/>
        <end position="239"/>
    </location>
</feature>
<feature type="strand" evidence="25">
    <location>
        <begin position="242"/>
        <end position="246"/>
    </location>
</feature>
<feature type="helix" evidence="25">
    <location>
        <begin position="256"/>
        <end position="263"/>
    </location>
</feature>
<feature type="strand" evidence="25">
    <location>
        <begin position="268"/>
        <end position="270"/>
    </location>
</feature>
<feature type="turn" evidence="25">
    <location>
        <begin position="271"/>
        <end position="274"/>
    </location>
</feature>
<feature type="strand" evidence="25">
    <location>
        <begin position="278"/>
        <end position="280"/>
    </location>
</feature>
<feature type="turn" evidence="25">
    <location>
        <begin position="281"/>
        <end position="283"/>
    </location>
</feature>
<feature type="helix" evidence="25">
    <location>
        <begin position="284"/>
        <end position="289"/>
    </location>
</feature>
<feature type="strand" evidence="25">
    <location>
        <begin position="293"/>
        <end position="297"/>
    </location>
</feature>
<feature type="helix" evidence="26">
    <location>
        <begin position="299"/>
        <end position="301"/>
    </location>
</feature>
<feature type="strand" evidence="24">
    <location>
        <begin position="305"/>
        <end position="307"/>
    </location>
</feature>
<feature type="helix" evidence="25">
    <location>
        <begin position="308"/>
        <end position="320"/>
    </location>
</feature>
<feature type="strand" evidence="21">
    <location>
        <begin position="324"/>
        <end position="326"/>
    </location>
</feature>
<feature type="helix" evidence="25">
    <location>
        <begin position="327"/>
        <end position="336"/>
    </location>
</feature>
<feature type="helix" evidence="25">
    <location>
        <begin position="339"/>
        <end position="350"/>
    </location>
</feature>
<feature type="strand" evidence="22">
    <location>
        <begin position="356"/>
        <end position="358"/>
    </location>
</feature>
<feature type="strand" evidence="25">
    <location>
        <begin position="363"/>
        <end position="365"/>
    </location>
</feature>
<feature type="helix" evidence="25">
    <location>
        <begin position="370"/>
        <end position="385"/>
    </location>
</feature>
<feature type="strand" evidence="25">
    <location>
        <begin position="393"/>
        <end position="395"/>
    </location>
</feature>
<feature type="helix" evidence="25">
    <location>
        <begin position="397"/>
        <end position="404"/>
    </location>
</feature>
<feature type="helix" evidence="25">
    <location>
        <begin position="405"/>
        <end position="407"/>
    </location>
</feature>
<feature type="helix" evidence="25">
    <location>
        <begin position="409"/>
        <end position="414"/>
    </location>
</feature>
<feature type="turn" evidence="25">
    <location>
        <begin position="418"/>
        <end position="420"/>
    </location>
</feature>
<feature type="strand" evidence="25">
    <location>
        <begin position="421"/>
        <end position="424"/>
    </location>
</feature>
<feature type="strand" evidence="25">
    <location>
        <begin position="432"/>
        <end position="435"/>
    </location>
</feature>
<feature type="helix" evidence="25">
    <location>
        <begin position="437"/>
        <end position="439"/>
    </location>
</feature>
<feature type="turn" evidence="25">
    <location>
        <begin position="440"/>
        <end position="442"/>
    </location>
</feature>
<feature type="strand" evidence="25">
    <location>
        <begin position="445"/>
        <end position="449"/>
    </location>
</feature>
<feature type="strand" evidence="25">
    <location>
        <begin position="452"/>
        <end position="458"/>
    </location>
</feature>
<feature type="strand" evidence="25">
    <location>
        <begin position="463"/>
        <end position="466"/>
    </location>
</feature>
<feature type="strand" evidence="25">
    <location>
        <begin position="472"/>
        <end position="475"/>
    </location>
</feature>
<feature type="helix" evidence="25">
    <location>
        <begin position="477"/>
        <end position="479"/>
    </location>
</feature>
<feature type="helix" evidence="25">
    <location>
        <begin position="481"/>
        <end position="487"/>
    </location>
</feature>
<feature type="strand" evidence="25">
    <location>
        <begin position="489"/>
        <end position="492"/>
    </location>
</feature>
<feature type="helix" evidence="25">
    <location>
        <begin position="494"/>
        <end position="498"/>
    </location>
</feature>
<feature type="helix" evidence="25">
    <location>
        <begin position="501"/>
        <end position="504"/>
    </location>
</feature>
<feature type="strand" evidence="25">
    <location>
        <begin position="509"/>
        <end position="513"/>
    </location>
</feature>
<feature type="turn" evidence="25">
    <location>
        <begin position="517"/>
        <end position="519"/>
    </location>
</feature>
<feature type="helix" evidence="25">
    <location>
        <begin position="522"/>
        <end position="524"/>
    </location>
</feature>
<feature type="strand" evidence="25">
    <location>
        <begin position="534"/>
        <end position="536"/>
    </location>
</feature>
<feature type="turn" evidence="25">
    <location>
        <begin position="538"/>
        <end position="540"/>
    </location>
</feature>
<feature type="strand" evidence="25">
    <location>
        <begin position="543"/>
        <end position="545"/>
    </location>
</feature>
<feature type="strand" evidence="23">
    <location>
        <begin position="548"/>
        <end position="550"/>
    </location>
</feature>
<feature type="strand" evidence="25">
    <location>
        <begin position="555"/>
        <end position="557"/>
    </location>
</feature>
<feature type="strand" evidence="25">
    <location>
        <begin position="559"/>
        <end position="561"/>
    </location>
</feature>
<feature type="turn" evidence="25">
    <location>
        <begin position="562"/>
        <end position="564"/>
    </location>
</feature>
<gene>
    <name evidence="1" type="primary">ureC</name>
</gene>
<comment type="catalytic activity">
    <reaction evidence="1 2 5 7 10 11 13 14 15 18">
        <text>urea + 2 H2O + H(+) = hydrogencarbonate + 2 NH4(+)</text>
        <dbReference type="Rhea" id="RHEA:20557"/>
        <dbReference type="ChEBI" id="CHEBI:15377"/>
        <dbReference type="ChEBI" id="CHEBI:15378"/>
        <dbReference type="ChEBI" id="CHEBI:16199"/>
        <dbReference type="ChEBI" id="CHEBI:17544"/>
        <dbReference type="ChEBI" id="CHEBI:28938"/>
        <dbReference type="EC" id="3.5.1.5"/>
    </reaction>
</comment>
<comment type="cofactor">
    <cofactor evidence="1 7 9 15">
        <name>Ni cation</name>
        <dbReference type="ChEBI" id="CHEBI:25516"/>
    </cofactor>
    <text evidence="1 7 9 15">Binds 2 nickel ions per subunit.</text>
</comment>
<comment type="activity regulation">
    <text evidence="2 5 13 18">The apoenzyme can be activated in vitro in the presence of nickel ions and carbon dioxide, which promotes carboxylation of Lys-217.</text>
</comment>
<comment type="biophysicochemical properties">
    <kinetics>
        <KM evidence="4 6 7 15">2.3 mM for urea</KM>
        <Vmax evidence="4 6 7 15">1.9 mmol/min/mg enzyme</Vmax>
    </kinetics>
    <phDependence>
        <text evidence="4 6 7 15">Optimum pH is 7.75.</text>
    </phDependence>
</comment>
<comment type="pathway">
    <text evidence="1">Nitrogen metabolism; urea degradation; CO(2) and NH(3) from urea (urease route): step 1/1.</text>
</comment>
<comment type="subunit">
    <text evidence="1 2 3 4 8 11 12 14 16 17 18 19 20">Heterotrimer of UreA (gamma), UreB (beta) and UreC (alpha) subunits. Three heterotrimers associate to form the active enzyme. The apoenzyme interacts with an accessory complex composed of UreD, UreF and UreG, which is required for the assembly of the nickel containing metallocenter of UreC. The UreE protein may also play a direct role as a metallochaperone in nickel transfer to the urease apoprotein.</text>
</comment>
<comment type="interaction">
    <interactant intactId="EBI-1028571">
        <id>P18314</id>
    </interactant>
    <interactant intactId="EBI-1028581">
        <id>P18316</id>
        <label>ureA</label>
    </interactant>
    <organismsDiffer>false</organismsDiffer>
    <experiments>11</experiments>
</comment>
<comment type="subcellular location">
    <subcellularLocation>
        <location evidence="1">Cytoplasm</location>
    </subcellularLocation>
</comment>
<comment type="PTM">
    <text evidence="1 4 12 16 17">Carboxylation allows a single lysine to coordinate two nickel ions.</text>
</comment>
<comment type="similarity">
    <text evidence="1">Belongs to the metallo-dependent hydrolases superfamily. Urease alpha subunit family.</text>
</comment>
<reference key="1">
    <citation type="journal article" date="1990" name="J. Bacteriol.">
        <title>Sequence of the Klebsiella aerogenes urease genes and evidence for accessory proteins facilitating nickel incorporation.</title>
        <authorList>
            <person name="Mulrooney S.B."/>
            <person name="Hausinger R.P."/>
        </authorList>
    </citation>
    <scope>NUCLEOTIDE SEQUENCE [GENOMIC DNA]</scope>
    <scope>CATALYTIC ACTIVITY</scope>
    <source>
        <strain>CG253</strain>
    </source>
</reference>
<reference key="2">
    <citation type="journal article" date="1992" name="J. Bacteriol.">
        <title>Klebsiella aerogenes urease gene cluster: sequence of ureD and demonstration that four accessory genes (ureD, ureE, ureF, and ureG) are involved in nickel metallocenter biosynthesis.</title>
        <authorList>
            <person name="Lee M.H."/>
            <person name="Mulrooney S.B."/>
            <person name="Renner M.J."/>
            <person name="Markowicz Y."/>
            <person name="Hausinger R.P."/>
        </authorList>
    </citation>
    <scope>COFACTOR</scope>
</reference>
<reference key="3">
    <citation type="journal article" date="1992" name="J. Biol. Chem.">
        <title>Site-directed mutagenesis of the active site cysteine in Klebsiella aerogenes urease.</title>
        <authorList>
            <person name="Martin P.R."/>
            <person name="Hausinger R.P."/>
        </authorList>
    </citation>
    <scope>CATALYTIC ACTIVITY</scope>
    <scope>COFACTOR</scope>
    <scope>BIOPHYSICOCHEMICAL PROPERTIES</scope>
    <scope>MUTAGENESIS OF CYS-319</scope>
</reference>
<reference key="4">
    <citation type="journal article" date="1993" name="Protein Sci.">
        <title>Site-directed mutagenesis of Klebsiella aerogenes urease: identification of histidine residues that appear to function in nickel ligation, substrate binding, and catalysis.</title>
        <authorList>
            <person name="Park I.-S."/>
            <person name="Hausinger R.P."/>
        </authorList>
    </citation>
    <scope>CATALYTIC ACTIVITY</scope>
    <scope>COFACTOR</scope>
    <scope>BIOPHYSICOCHEMICAL PROPERTIES</scope>
    <scope>MUTAGENESIS OF HIS-134; HIS-136; HIS-219; HIS-246; HIS-320 AND HIS-320</scope>
</reference>
<reference key="5">
    <citation type="journal article" date="1994" name="Proc. Natl. Acad. Sci. U.S.A.">
        <title>In vitro activation of urease apoprotein and role of UreD as a chaperone required for nickel metallocenter assembly.</title>
        <authorList>
            <person name="Park I.-S."/>
            <person name="Carr M.B."/>
            <person name="Hausinger R.P."/>
        </authorList>
    </citation>
    <scope>CATALYTIC ACTIVITY</scope>
    <scope>INTERACTION WITH UREA; UREB AND URED</scope>
</reference>
<reference key="6">
    <citation type="journal article" date="1995" name="J. Bacteriol.">
        <title>Evidence for the presence of urease apoprotein complexes containing UreD, UreF, and UreG in cells that are competent for in vivo enzyme activation.</title>
        <authorList>
            <person name="Park I.-S."/>
            <person name="Hausinger R.P."/>
        </authorList>
    </citation>
    <scope>CATALYTIC ACTIVITY</scope>
    <scope>INTERACTION WITH UREA; UREB; URED; UREF AND UREG</scope>
</reference>
<reference key="7">
    <citation type="journal article" date="1995" name="Science">
        <title>Requirement of carbon dioxide for in vitro assembly of the urease nickel metallocenter.</title>
        <authorList>
            <person name="Park I.-S."/>
            <person name="Hausinger R.P."/>
        </authorList>
    </citation>
    <scope>CATALYTIC ACTIVITY</scope>
    <scope>ACTIVITY REGULATION</scope>
</reference>
<reference key="8">
    <citation type="journal article" date="1996" name="J. Bacteriol.">
        <title>Purification and activation properties of UreD-UreF-urease apoprotein complexes.</title>
        <authorList>
            <person name="Moncrief M.B.C."/>
            <person name="Hausinger R.P."/>
        </authorList>
    </citation>
    <scope>CATALYTIC ACTIVITY</scope>
    <scope>ACTIVITY REGULATION</scope>
    <scope>INTERACTION WITH UREA; UREB; URED AND UREF</scope>
</reference>
<reference key="9">
    <citation type="journal article" date="1999" name="Proc. Natl. Acad. Sci. U.S.A.">
        <title>GTP-dependent activation of urease apoprotein in complex with the UreD, UreF, and UreG accessory proteins.</title>
        <authorList>
            <person name="Soriano A."/>
            <person name="Hausinger R.P."/>
        </authorList>
    </citation>
    <scope>CATALYTIC ACTIVITY</scope>
    <scope>ACTIVITY REGULATION</scope>
    <scope>INTERACTION WITH UREA; UREB; URED; UREF AND UREG</scope>
</reference>
<reference key="10">
    <citation type="journal article" date="2000" name="Biochemistry">
        <title>UreE stimulation of GTP-dependent urease activation in the UreD-UreF-UreG-urease apoprotein complex.</title>
        <authorList>
            <person name="Soriano A."/>
            <person name="Colpas G.J."/>
            <person name="Hausinger R.P."/>
        </authorList>
    </citation>
    <scope>CATALYTIC ACTIVITY</scope>
    <scope>ACTIVITY REGULATION</scope>
    <scope>ACTIVATION OF THE APOPROTEIN BY UREE</scope>
</reference>
<reference key="11">
    <citation type="journal article" date="2001" name="Arch. Biochem. Biophys.">
        <title>Dual effects of ionic strength on Klebsiella aerogenes urease: pH-dependent activation and inhibition.</title>
        <authorList>
            <person name="Mulrooney S.B."/>
            <person name="Zakharian T."/>
            <person name="Schaller R.A."/>
            <person name="Hausinger R.P."/>
        </authorList>
    </citation>
    <scope>BIOPHYSICOCHEMICAL PROPERTIES</scope>
</reference>
<reference key="12">
    <citation type="journal article" date="2004" name="J. Biol. Chem.">
        <title>Chemical cross-linking and mass spectrometric identification of sites of interaction for UreD, UreF, and urease.</title>
        <authorList>
            <person name="Chang Z."/>
            <person name="Kuchar J."/>
            <person name="Hausinger R.P."/>
        </authorList>
    </citation>
    <scope>INTERACTION WITH UREA; UREB; URED AND UREF</scope>
    <scope>IDENTIFICATION BY MASS SPECTROMETRY</scope>
</reference>
<reference key="13">
    <citation type="journal article" date="1995" name="Science">
        <title>The crystal structure of urease from Klebsiella aerogenes.</title>
        <authorList>
            <person name="Jabri E."/>
            <person name="Carr M.B."/>
            <person name="Hausinger R.P."/>
            <person name="Karplus P.A."/>
        </authorList>
    </citation>
    <scope>X-RAY CRYSTALLOGRAPHY (2.2 ANGSTROMS) IN COMPLEX WITH UREA; UREB AND NICKEL IONS</scope>
    <scope>CARBOXYLATION AT LYS-217</scope>
</reference>
<reference key="14">
    <citation type="journal article" date="1996" name="Biochemistry">
        <title>Structures of the Klebsiella aerogenes urease apoenzyme and two active-site mutants.</title>
        <authorList>
            <person name="Jabri E."/>
            <person name="Karplus P.A."/>
        </authorList>
    </citation>
    <scope>X-RAY CRYSTALLOGRAPHY (2.3 ANGSTROMS) OF WILD-TYPE AND MUTANTS ALA-219 AND ALA-320 IN COMPLEX WITH UREA; UREB AND NICKEL IONS</scope>
    <scope>CARBOXYLATION AT LYS-217</scope>
</reference>
<reference key="15">
    <citation type="journal article" date="1996" name="J. Biol. Chem.">
        <title>Characterization of the mononickel metallocenter in H134A mutant urease.</title>
        <authorList>
            <person name="Park I.-S."/>
            <person name="Michel L.O."/>
            <person name="Pearson M.A."/>
            <person name="Jabri E."/>
            <person name="Karplus P.A."/>
            <person name="Wang S."/>
            <person name="Dong J."/>
            <person name="Scott R.A."/>
            <person name="Koehler B.P."/>
            <person name="Johnson M.K."/>
            <person name="Hausinger R.P."/>
        </authorList>
    </citation>
    <scope>X-RAY CRYSTALLOGRAPHY (2.0 ANGSTROMS) OF MUTANT ALA-134 IN COMPLEX WITH UREA; UREB AND NICKEL IONS</scope>
    <scope>MAGNETIC CIRCULAR DICHROISM</scope>
    <scope>ABSORPTION SPECTROSCOPY</scope>
    <scope>CARBOXYLATION AT LYS-217</scope>
</reference>
<reference key="16">
    <citation type="journal article" date="1997" name="Biochemistry">
        <title>Structures of Cys319 variants and acetohydroxamate-inhibited Klebsiella aerogenes urease.</title>
        <authorList>
            <person name="Pearson M.A."/>
            <person name="Michel L.O."/>
            <person name="Hausinger R.P."/>
            <person name="Karplus P.A."/>
        </authorList>
    </citation>
    <scope>X-RAY CRYSTALLOGRAPHY (2.0 ANGSTROMS) OF MUTANTS ALA/ASP/SER/TYR-319 IN COMPLEX WITH UREA; UREB; NICKEL IONS AND ACETOHYDROXAMIC ACID</scope>
</reference>
<reference key="17">
    <citation type="journal article" date="1998" name="Biochemistry">
        <title>Chemical rescue of Klebsiella aerogenes urease variants lacking the carbamylated-lysine nickel ligand.</title>
        <authorList>
            <person name="Pearson M.A."/>
            <person name="Schaller R.A."/>
            <person name="Michel L.O."/>
            <person name="Karplus P.A."/>
            <person name="Hausinger R.P."/>
        </authorList>
    </citation>
    <scope>X-RAY CRYSTALLOGRAPHY (2.0 ANGSTROMS) OF MUTANTS ALA/CYS/GLU-217 IN COMPLEX WITH UREA; UREB AND FORMATE</scope>
    <scope>MUTAGENESIS OF LYS-217</scope>
</reference>
<reference key="18">
    <citation type="journal article" date="1999" name="J. Biol. Inorg. Chem.">
        <title>Characterization of metal-substituted Klebsiella aerogenes urease.</title>
        <authorList>
            <person name="Yamaguchi K."/>
            <person name="Cosper N.J."/>
            <person name="Staalhandske C."/>
            <person name="Scott R.A."/>
            <person name="Pearson M.A."/>
            <person name="Karplus P.A."/>
            <person name="Hausinger R.P."/>
        </authorList>
    </citation>
    <scope>X-RAY CRYSTALLOGRAPHY (2.5 ANGSTROMS) IN COMPLEX WITH UREA; UREB AND MANGANESE IONS</scope>
    <scope>ABSORPTION SPECTROSCOPY</scope>
    <scope>MUTAGENESIS OF CYS-319</scope>
</reference>
<reference key="19">
    <citation type="journal article" date="2000" name="Biochemistry">
        <title>Kinetic and structural characterization of urease active site variants.</title>
        <authorList>
            <person name="Pearson M.A."/>
            <person name="Park I.-S."/>
            <person name="Schaller R.A."/>
            <person name="Michel L.O."/>
            <person name="Karplus P.A."/>
            <person name="Hausinger R.P."/>
        </authorList>
    </citation>
    <scope>X-RAY CRYSTALLOGRAPHY (1.6 ANGSTROMS) OF WILD-TYPE AND MUTANTS ASN/GLN-219; ALA-221 AND ASN/GLN-320 IN COMPLEX WITH UREA; UREB AND NICKEL IONS</scope>
    <scope>CARBOXYLATION AT LYS-217</scope>
    <scope>BIOPHYSICOCHEMICAL PROPERTIES</scope>
    <scope>MUTAGENESIS OF HIS-219; ASP-221; HIS-320 AND ARG-336</scope>
</reference>
<evidence type="ECO:0000255" key="1">
    <source>
        <dbReference type="HAMAP-Rule" id="MF_01953"/>
    </source>
</evidence>
<evidence type="ECO:0000269" key="2">
    <source>
    </source>
</evidence>
<evidence type="ECO:0000269" key="3">
    <source>
    </source>
</evidence>
<evidence type="ECO:0000269" key="4">
    <source>
    </source>
</evidence>
<evidence type="ECO:0000269" key="5">
    <source>
    </source>
</evidence>
<evidence type="ECO:0000269" key="6">
    <source>
    </source>
</evidence>
<evidence type="ECO:0000269" key="7">
    <source>
    </source>
</evidence>
<evidence type="ECO:0000269" key="8">
    <source>
    </source>
</evidence>
<evidence type="ECO:0000269" key="9">
    <source>
    </source>
</evidence>
<evidence type="ECO:0000269" key="10">
    <source>
    </source>
</evidence>
<evidence type="ECO:0000269" key="11">
    <source>
    </source>
</evidence>
<evidence type="ECO:0000269" key="12">
    <source>
    </source>
</evidence>
<evidence type="ECO:0000269" key="13">
    <source>
    </source>
</evidence>
<evidence type="ECO:0000269" key="14">
    <source>
    </source>
</evidence>
<evidence type="ECO:0000269" key="15">
    <source>
    </source>
</evidence>
<evidence type="ECO:0000269" key="16">
    <source>
    </source>
</evidence>
<evidence type="ECO:0000269" key="17">
    <source>
    </source>
</evidence>
<evidence type="ECO:0000269" key="18">
    <source>
    </source>
</evidence>
<evidence type="ECO:0000269" key="19">
    <source>
    </source>
</evidence>
<evidence type="ECO:0000269" key="20">
    <source>
    </source>
</evidence>
<evidence type="ECO:0007829" key="21">
    <source>
        <dbReference type="PDB" id="1EJW"/>
    </source>
</evidence>
<evidence type="ECO:0007829" key="22">
    <source>
        <dbReference type="PDB" id="1EJX"/>
    </source>
</evidence>
<evidence type="ECO:0007829" key="23">
    <source>
        <dbReference type="PDB" id="1FWI"/>
    </source>
</evidence>
<evidence type="ECO:0007829" key="24">
    <source>
        <dbReference type="PDB" id="1KRA"/>
    </source>
</evidence>
<evidence type="ECO:0007829" key="25">
    <source>
        <dbReference type="PDB" id="4EP8"/>
    </source>
</evidence>
<evidence type="ECO:0007829" key="26">
    <source>
        <dbReference type="PDB" id="4EPB"/>
    </source>
</evidence>
<evidence type="ECO:0007829" key="27">
    <source>
        <dbReference type="PDB" id="4EPD"/>
    </source>
</evidence>
<name>URE1_KLEAE</name>
<proteinExistence type="evidence at protein level"/>
<accession>P18314</accession>
<dbReference type="EC" id="3.5.1.5" evidence="1"/>
<dbReference type="EMBL" id="M36068">
    <property type="protein sequence ID" value="AAA25151.1"/>
    <property type="molecule type" value="Genomic_DNA"/>
</dbReference>
<dbReference type="PDB" id="1A5K">
    <property type="method" value="X-ray"/>
    <property type="resolution" value="2.20 A"/>
    <property type="chains" value="C=2-567"/>
</dbReference>
<dbReference type="PDB" id="1A5L">
    <property type="method" value="X-ray"/>
    <property type="resolution" value="2.20 A"/>
    <property type="chains" value="C=2-567"/>
</dbReference>
<dbReference type="PDB" id="1A5M">
    <property type="method" value="X-ray"/>
    <property type="resolution" value="2.00 A"/>
    <property type="chains" value="C=2-567"/>
</dbReference>
<dbReference type="PDB" id="1A5N">
    <property type="method" value="X-ray"/>
    <property type="resolution" value="2.40 A"/>
    <property type="chains" value="C=2-567"/>
</dbReference>
<dbReference type="PDB" id="1A5O">
    <property type="method" value="X-ray"/>
    <property type="resolution" value="2.50 A"/>
    <property type="chains" value="C=2-567"/>
</dbReference>
<dbReference type="PDB" id="1EF2">
    <property type="method" value="X-ray"/>
    <property type="resolution" value="2.50 A"/>
    <property type="chains" value="A=2-567"/>
</dbReference>
<dbReference type="PDB" id="1EJR">
    <property type="method" value="X-ray"/>
    <property type="resolution" value="2.00 A"/>
    <property type="chains" value="C=1-567"/>
</dbReference>
<dbReference type="PDB" id="1EJS">
    <property type="method" value="X-ray"/>
    <property type="resolution" value="2.00 A"/>
    <property type="chains" value="C=1-567"/>
</dbReference>
<dbReference type="PDB" id="1EJT">
    <property type="method" value="X-ray"/>
    <property type="resolution" value="2.00 A"/>
    <property type="chains" value="C=1-567"/>
</dbReference>
<dbReference type="PDB" id="1EJU">
    <property type="method" value="X-ray"/>
    <property type="resolution" value="2.00 A"/>
    <property type="chains" value="C=1-567"/>
</dbReference>
<dbReference type="PDB" id="1EJV">
    <property type="method" value="X-ray"/>
    <property type="resolution" value="2.40 A"/>
    <property type="chains" value="C=1-567"/>
</dbReference>
<dbReference type="PDB" id="1EJW">
    <property type="method" value="X-ray"/>
    <property type="resolution" value="1.90 A"/>
    <property type="chains" value="C=1-567"/>
</dbReference>
<dbReference type="PDB" id="1EJX">
    <property type="method" value="X-ray"/>
    <property type="resolution" value="1.60 A"/>
    <property type="chains" value="C=1-567"/>
</dbReference>
<dbReference type="PDB" id="1FWA">
    <property type="method" value="X-ray"/>
    <property type="resolution" value="2.00 A"/>
    <property type="chains" value="C=1-567"/>
</dbReference>
<dbReference type="PDB" id="1FWB">
    <property type="method" value="X-ray"/>
    <property type="resolution" value="2.00 A"/>
    <property type="chains" value="C=1-567"/>
</dbReference>
<dbReference type="PDB" id="1FWC">
    <property type="method" value="X-ray"/>
    <property type="resolution" value="2.00 A"/>
    <property type="chains" value="C=1-567"/>
</dbReference>
<dbReference type="PDB" id="1FWD">
    <property type="method" value="X-ray"/>
    <property type="resolution" value="2.00 A"/>
    <property type="chains" value="C=1-567"/>
</dbReference>
<dbReference type="PDB" id="1FWE">
    <property type="method" value="X-ray"/>
    <property type="resolution" value="2.00 A"/>
    <property type="chains" value="C=1-567"/>
</dbReference>
<dbReference type="PDB" id="1FWF">
    <property type="method" value="X-ray"/>
    <property type="resolution" value="2.00 A"/>
    <property type="chains" value="C=1-567"/>
</dbReference>
<dbReference type="PDB" id="1FWG">
    <property type="method" value="X-ray"/>
    <property type="resolution" value="2.00 A"/>
    <property type="chains" value="C=1-567"/>
</dbReference>
<dbReference type="PDB" id="1FWH">
    <property type="method" value="X-ray"/>
    <property type="resolution" value="2.00 A"/>
    <property type="chains" value="C=1-567"/>
</dbReference>
<dbReference type="PDB" id="1FWI">
    <property type="method" value="X-ray"/>
    <property type="resolution" value="2.00 A"/>
    <property type="chains" value="C=1-567"/>
</dbReference>
<dbReference type="PDB" id="1FWJ">
    <property type="method" value="X-ray"/>
    <property type="resolution" value="2.20 A"/>
    <property type="chains" value="C=1-567"/>
</dbReference>
<dbReference type="PDB" id="1KRA">
    <property type="method" value="X-ray"/>
    <property type="resolution" value="2.30 A"/>
    <property type="chains" value="C=1-567"/>
</dbReference>
<dbReference type="PDB" id="1KRB">
    <property type="method" value="X-ray"/>
    <property type="resolution" value="2.50 A"/>
    <property type="chains" value="C=1-567"/>
</dbReference>
<dbReference type="PDB" id="1KRC">
    <property type="method" value="X-ray"/>
    <property type="resolution" value="2.50 A"/>
    <property type="chains" value="C=1-567"/>
</dbReference>
<dbReference type="PDB" id="2KAU">
    <property type="method" value="X-ray"/>
    <property type="resolution" value="2.00 A"/>
    <property type="chains" value="C=1-567"/>
</dbReference>
<dbReference type="PDB" id="4EP8">
    <property type="method" value="X-ray"/>
    <property type="resolution" value="1.55 A"/>
    <property type="chains" value="C=2-567"/>
</dbReference>
<dbReference type="PDB" id="4EPB">
    <property type="method" value="X-ray"/>
    <property type="resolution" value="1.75 A"/>
    <property type="chains" value="C=2-567"/>
</dbReference>
<dbReference type="PDB" id="4EPD">
    <property type="method" value="X-ray"/>
    <property type="resolution" value="1.70 A"/>
    <property type="chains" value="C=2-567"/>
</dbReference>
<dbReference type="PDB" id="4EPE">
    <property type="method" value="X-ray"/>
    <property type="resolution" value="2.05 A"/>
    <property type="chains" value="C=2-567"/>
</dbReference>
<dbReference type="PDBsum" id="1A5K"/>
<dbReference type="PDBsum" id="1A5L"/>
<dbReference type="PDBsum" id="1A5M"/>
<dbReference type="PDBsum" id="1A5N"/>
<dbReference type="PDBsum" id="1A5O"/>
<dbReference type="PDBsum" id="1EF2"/>
<dbReference type="PDBsum" id="1EJR"/>
<dbReference type="PDBsum" id="1EJS"/>
<dbReference type="PDBsum" id="1EJT"/>
<dbReference type="PDBsum" id="1EJU"/>
<dbReference type="PDBsum" id="1EJV"/>
<dbReference type="PDBsum" id="1EJW"/>
<dbReference type="PDBsum" id="1EJX"/>
<dbReference type="PDBsum" id="1FWA"/>
<dbReference type="PDBsum" id="1FWB"/>
<dbReference type="PDBsum" id="1FWC"/>
<dbReference type="PDBsum" id="1FWD"/>
<dbReference type="PDBsum" id="1FWE"/>
<dbReference type="PDBsum" id="1FWF"/>
<dbReference type="PDBsum" id="1FWG"/>
<dbReference type="PDBsum" id="1FWH"/>
<dbReference type="PDBsum" id="1FWI"/>
<dbReference type="PDBsum" id="1FWJ"/>
<dbReference type="PDBsum" id="1KRA"/>
<dbReference type="PDBsum" id="1KRB"/>
<dbReference type="PDBsum" id="1KRC"/>
<dbReference type="PDBsum" id="2KAU"/>
<dbReference type="PDBsum" id="4EP8"/>
<dbReference type="PDBsum" id="4EPB"/>
<dbReference type="PDBsum" id="4EPD"/>
<dbReference type="PDBsum" id="4EPE"/>
<dbReference type="SMR" id="P18314"/>
<dbReference type="IntAct" id="P18314">
    <property type="interactions" value="3"/>
</dbReference>
<dbReference type="DrugBank" id="DB00551">
    <property type="generic name" value="Acetohydroxamic acid"/>
</dbReference>
<dbReference type="DrugBank" id="DB05265">
    <property type="generic name" value="Ecabet"/>
</dbReference>
<dbReference type="MEROPS" id="M38.982"/>
<dbReference type="BRENDA" id="3.5.1.5">
    <property type="organism ID" value="152"/>
</dbReference>
<dbReference type="SABIO-RK" id="P18314"/>
<dbReference type="UniPathway" id="UPA00258">
    <property type="reaction ID" value="UER00370"/>
</dbReference>
<dbReference type="EvolutionaryTrace" id="P18314"/>
<dbReference type="GO" id="GO:0005737">
    <property type="term" value="C:cytoplasm"/>
    <property type="evidence" value="ECO:0007669"/>
    <property type="project" value="UniProtKB-SubCell"/>
</dbReference>
<dbReference type="GO" id="GO:0016151">
    <property type="term" value="F:nickel cation binding"/>
    <property type="evidence" value="ECO:0007669"/>
    <property type="project" value="UniProtKB-UniRule"/>
</dbReference>
<dbReference type="GO" id="GO:0009039">
    <property type="term" value="F:urease activity"/>
    <property type="evidence" value="ECO:0007669"/>
    <property type="project" value="UniProtKB-UniRule"/>
</dbReference>
<dbReference type="GO" id="GO:0043419">
    <property type="term" value="P:urea catabolic process"/>
    <property type="evidence" value="ECO:0007669"/>
    <property type="project" value="UniProtKB-UniRule"/>
</dbReference>
<dbReference type="CDD" id="cd00375">
    <property type="entry name" value="Urease_alpha"/>
    <property type="match status" value="1"/>
</dbReference>
<dbReference type="Gene3D" id="3.20.20.140">
    <property type="entry name" value="Metal-dependent hydrolases"/>
    <property type="match status" value="1"/>
</dbReference>
<dbReference type="Gene3D" id="2.30.40.10">
    <property type="entry name" value="Urease, subunit C, domain 1"/>
    <property type="match status" value="1"/>
</dbReference>
<dbReference type="HAMAP" id="MF_01953">
    <property type="entry name" value="Urease_alpha"/>
    <property type="match status" value="1"/>
</dbReference>
<dbReference type="InterPro" id="IPR006680">
    <property type="entry name" value="Amidohydro-rel"/>
</dbReference>
<dbReference type="InterPro" id="IPR011059">
    <property type="entry name" value="Metal-dep_hydrolase_composite"/>
</dbReference>
<dbReference type="InterPro" id="IPR032466">
    <property type="entry name" value="Metal_Hydrolase"/>
</dbReference>
<dbReference type="InterPro" id="IPR011612">
    <property type="entry name" value="Urease_alpha_N_dom"/>
</dbReference>
<dbReference type="InterPro" id="IPR050112">
    <property type="entry name" value="Urease_alpha_subunit"/>
</dbReference>
<dbReference type="InterPro" id="IPR017950">
    <property type="entry name" value="Urease_AS"/>
</dbReference>
<dbReference type="InterPro" id="IPR005848">
    <property type="entry name" value="Urease_asu"/>
</dbReference>
<dbReference type="InterPro" id="IPR017951">
    <property type="entry name" value="Urease_asu_c"/>
</dbReference>
<dbReference type="InterPro" id="IPR029754">
    <property type="entry name" value="Urease_Ni-bd"/>
</dbReference>
<dbReference type="NCBIfam" id="NF009685">
    <property type="entry name" value="PRK13206.1"/>
    <property type="match status" value="1"/>
</dbReference>
<dbReference type="NCBIfam" id="NF009686">
    <property type="entry name" value="PRK13207.1"/>
    <property type="match status" value="1"/>
</dbReference>
<dbReference type="NCBIfam" id="TIGR01792">
    <property type="entry name" value="urease_alph"/>
    <property type="match status" value="1"/>
</dbReference>
<dbReference type="PANTHER" id="PTHR43440">
    <property type="entry name" value="UREASE"/>
    <property type="match status" value="1"/>
</dbReference>
<dbReference type="PANTHER" id="PTHR43440:SF1">
    <property type="entry name" value="UREASE"/>
    <property type="match status" value="1"/>
</dbReference>
<dbReference type="Pfam" id="PF01979">
    <property type="entry name" value="Amidohydro_1"/>
    <property type="match status" value="1"/>
</dbReference>
<dbReference type="Pfam" id="PF00449">
    <property type="entry name" value="Urease_alpha"/>
    <property type="match status" value="1"/>
</dbReference>
<dbReference type="PRINTS" id="PR01752">
    <property type="entry name" value="UREASE"/>
</dbReference>
<dbReference type="SUPFAM" id="SSF51338">
    <property type="entry name" value="Composite domain of metallo-dependent hydrolases"/>
    <property type="match status" value="2"/>
</dbReference>
<dbReference type="SUPFAM" id="SSF51556">
    <property type="entry name" value="Metallo-dependent hydrolases"/>
    <property type="match status" value="1"/>
</dbReference>
<dbReference type="PROSITE" id="PS01120">
    <property type="entry name" value="UREASE_1"/>
    <property type="match status" value="1"/>
</dbReference>
<dbReference type="PROSITE" id="PS00145">
    <property type="entry name" value="UREASE_2"/>
    <property type="match status" value="1"/>
</dbReference>
<dbReference type="PROSITE" id="PS51368">
    <property type="entry name" value="UREASE_3"/>
    <property type="match status" value="1"/>
</dbReference>
<keyword id="KW-0002">3D-structure</keyword>
<keyword id="KW-0963">Cytoplasm</keyword>
<keyword id="KW-0378">Hydrolase</keyword>
<keyword id="KW-0479">Metal-binding</keyword>
<keyword id="KW-0533">Nickel</keyword>
<protein>
    <recommendedName>
        <fullName evidence="1">Urease subunit alpha</fullName>
        <ecNumber evidence="1">3.5.1.5</ecNumber>
    </recommendedName>
    <alternativeName>
        <fullName evidence="1">Urea amidohydrolase subunit alpha</fullName>
    </alternativeName>
</protein>
<organism>
    <name type="scientific">Klebsiella aerogenes</name>
    <name type="common">Enterobacter aerogenes</name>
    <dbReference type="NCBI Taxonomy" id="548"/>
    <lineage>
        <taxon>Bacteria</taxon>
        <taxon>Pseudomonadati</taxon>
        <taxon>Pseudomonadota</taxon>
        <taxon>Gammaproteobacteria</taxon>
        <taxon>Enterobacterales</taxon>
        <taxon>Enterobacteriaceae</taxon>
        <taxon>Klebsiella/Raoultella group</taxon>
        <taxon>Klebsiella</taxon>
    </lineage>
</organism>
<sequence length="567" mass="60305">MSNISRQAYADMFGPTVGDKVRLADTELWIEVEDDLTTYGEEVKFGGGKVIRDGMGQGQMLAADCVDLVLTNALIVDHWGIVKADIGVKDGRIFAIGKAGNPDIQPNVTIPIGAATEVIAAEGKIVTAGGIDTHIHWICPQQAEEALVSGVTTMVGGGTGPAAGTHATTCTPGPWYISRMLQAADSLPVNIGLLGKGNVSQPDALREQVAAGVIGLKIHEDWGATPAAIDCALTVADEMDIQVALHSDTLNESGFVEDTLAAIGGRTIHTFHTEGAGGGHAPDIITACAHPNILPSSTNPTLPYTLNTIDEHLDMLMVCHHLDPDIAEDVAFAESRIRRETIAAEDVLHDLGAFSLTSSDSQAMGRVGEVILRTWQVAHRMKVQRGALAEETGDNDNFRVKRYIAKYTINPALTHGIAHEVGSIEVGKLADLVVWSPAFFGVKPATVIKGGMIAIAPMGDINASIPTPQPVHYRPMFGALGSARHHCRLTFLSQAAAANGVAERLNLRSAIAVVKGCRTVQKADMVHNSLQPNITVDAQTYEVRVDGELITSEPADVLPMAQRYFLF</sequence>